<comment type="function">
    <text evidence="1">Specifically methylates the N3 position of the uracil ring of uridine 1498 (m3U1498) in 16S rRNA. Acts on the fully assembled 30S ribosomal subunit (By similarity).</text>
</comment>
<comment type="catalytic activity">
    <reaction>
        <text>uridine(1498) in 16S rRNA + S-adenosyl-L-methionine = N(3)-methyluridine(1498) in 16S rRNA + S-adenosyl-L-homocysteine + H(+)</text>
        <dbReference type="Rhea" id="RHEA:42920"/>
        <dbReference type="Rhea" id="RHEA-COMP:10283"/>
        <dbReference type="Rhea" id="RHEA-COMP:10284"/>
        <dbReference type="ChEBI" id="CHEBI:15378"/>
        <dbReference type="ChEBI" id="CHEBI:57856"/>
        <dbReference type="ChEBI" id="CHEBI:59789"/>
        <dbReference type="ChEBI" id="CHEBI:65315"/>
        <dbReference type="ChEBI" id="CHEBI:74502"/>
        <dbReference type="EC" id="2.1.1.193"/>
    </reaction>
</comment>
<comment type="subcellular location">
    <subcellularLocation>
        <location evidence="1">Cytoplasm</location>
    </subcellularLocation>
</comment>
<comment type="similarity">
    <text evidence="2">Belongs to the RNA methyltransferase RsmE family.</text>
</comment>
<name>RSME_AQUAE</name>
<keyword id="KW-0002">3D-structure</keyword>
<keyword id="KW-0963">Cytoplasm</keyword>
<keyword id="KW-0489">Methyltransferase</keyword>
<keyword id="KW-1185">Reference proteome</keyword>
<keyword id="KW-0698">rRNA processing</keyword>
<keyword id="KW-0949">S-adenosyl-L-methionine</keyword>
<keyword id="KW-0808">Transferase</keyword>
<protein>
    <recommendedName>
        <fullName>Ribosomal RNA small subunit methyltransferase E</fullName>
        <ecNumber>2.1.1.193</ecNumber>
    </recommendedName>
    <alternativeName>
        <fullName>16S rRNA m3U1498 methyltransferase</fullName>
    </alternativeName>
</protein>
<sequence>MHVFYSEERRGNLLILREGEVKHFRVRRIEKDEEFGVIHEGKIYVCKVRREDKREISCEIVEELETKLPPKDITLYQSVTVDLKTMDTIVRQATELGVLTFVPIISERSFQKEEAILKKTEKWKRIVIEAMKQSRRPIPMEIKKPVRLSDLIPESEENIILDNFYEGVKPKDVNLEAKTYSVVVGPEGGFSKRESQILREKGFKSVLLEPYTLRTETAVVSIVSILMNF</sequence>
<organism>
    <name type="scientific">Aquifex aeolicus (strain VF5)</name>
    <dbReference type="NCBI Taxonomy" id="224324"/>
    <lineage>
        <taxon>Bacteria</taxon>
        <taxon>Pseudomonadati</taxon>
        <taxon>Aquificota</taxon>
        <taxon>Aquificia</taxon>
        <taxon>Aquificales</taxon>
        <taxon>Aquificaceae</taxon>
        <taxon>Aquifex</taxon>
    </lineage>
</organism>
<dbReference type="EC" id="2.1.1.193"/>
<dbReference type="EMBL" id="AE000657">
    <property type="protein sequence ID" value="AAC06516.1"/>
    <property type="molecule type" value="Genomic_DNA"/>
</dbReference>
<dbReference type="PIR" id="E70315">
    <property type="entry name" value="E70315"/>
</dbReference>
<dbReference type="RefSeq" id="NP_213112.1">
    <property type="nucleotide sequence ID" value="NC_000918.1"/>
</dbReference>
<dbReference type="RefSeq" id="WP_010880050.1">
    <property type="nucleotide sequence ID" value="NC_000918.1"/>
</dbReference>
<dbReference type="PDB" id="2EGV">
    <property type="method" value="X-ray"/>
    <property type="resolution" value="1.45 A"/>
    <property type="chains" value="A/B=1-229"/>
</dbReference>
<dbReference type="PDB" id="2EGW">
    <property type="method" value="X-ray"/>
    <property type="resolution" value="2.80 A"/>
    <property type="chains" value="A/B=1-229"/>
</dbReference>
<dbReference type="PDBsum" id="2EGV"/>
<dbReference type="PDBsum" id="2EGW"/>
<dbReference type="SMR" id="O66552"/>
<dbReference type="FunCoup" id="O66552">
    <property type="interactions" value="295"/>
</dbReference>
<dbReference type="STRING" id="224324.aq_165"/>
<dbReference type="EnsemblBacteria" id="AAC06516">
    <property type="protein sequence ID" value="AAC06516"/>
    <property type="gene ID" value="aq_165"/>
</dbReference>
<dbReference type="KEGG" id="aae:aq_165"/>
<dbReference type="PATRIC" id="fig|224324.8.peg.141"/>
<dbReference type="eggNOG" id="COG1385">
    <property type="taxonomic scope" value="Bacteria"/>
</dbReference>
<dbReference type="HOGENOM" id="CLU_067442_3_0_0"/>
<dbReference type="InParanoid" id="O66552"/>
<dbReference type="OrthoDB" id="9815641at2"/>
<dbReference type="EvolutionaryTrace" id="O66552"/>
<dbReference type="Proteomes" id="UP000000798">
    <property type="component" value="Chromosome"/>
</dbReference>
<dbReference type="GO" id="GO:0005737">
    <property type="term" value="C:cytoplasm"/>
    <property type="evidence" value="ECO:0007669"/>
    <property type="project" value="UniProtKB-SubCell"/>
</dbReference>
<dbReference type="GO" id="GO:0070042">
    <property type="term" value="F:rRNA (uridine-N3-)-methyltransferase activity"/>
    <property type="evidence" value="ECO:0000318"/>
    <property type="project" value="GO_Central"/>
</dbReference>
<dbReference type="GO" id="GO:0070475">
    <property type="term" value="P:rRNA base methylation"/>
    <property type="evidence" value="ECO:0000318"/>
    <property type="project" value="GO_Central"/>
</dbReference>
<dbReference type="CDD" id="cd18084">
    <property type="entry name" value="RsmE-like"/>
    <property type="match status" value="1"/>
</dbReference>
<dbReference type="FunFam" id="3.40.1280.10:FF:000023">
    <property type="entry name" value="Ribosomal RNA small subunit methyltransferase E"/>
    <property type="match status" value="1"/>
</dbReference>
<dbReference type="Gene3D" id="3.40.1280.10">
    <property type="match status" value="1"/>
</dbReference>
<dbReference type="Gene3D" id="2.40.240.20">
    <property type="entry name" value="Hypothetical PUA domain-like, domain 1"/>
    <property type="match status" value="1"/>
</dbReference>
<dbReference type="InterPro" id="IPR029028">
    <property type="entry name" value="Alpha/beta_knot_MTases"/>
</dbReference>
<dbReference type="InterPro" id="IPR006700">
    <property type="entry name" value="RsmE"/>
</dbReference>
<dbReference type="InterPro" id="IPR046886">
    <property type="entry name" value="RsmE_MTase_dom"/>
</dbReference>
<dbReference type="InterPro" id="IPR046887">
    <property type="entry name" value="RsmE_PUA-like"/>
</dbReference>
<dbReference type="InterPro" id="IPR029026">
    <property type="entry name" value="tRNA_m1G_MTases_N"/>
</dbReference>
<dbReference type="NCBIfam" id="TIGR00046">
    <property type="entry name" value="RsmE family RNA methyltransferase"/>
    <property type="match status" value="1"/>
</dbReference>
<dbReference type="PANTHER" id="PTHR30027:SF3">
    <property type="entry name" value="16S RRNA (URACIL(1498)-N(3))-METHYLTRANSFERASE"/>
    <property type="match status" value="1"/>
</dbReference>
<dbReference type="PANTHER" id="PTHR30027">
    <property type="entry name" value="RIBOSOMAL RNA SMALL SUBUNIT METHYLTRANSFERASE E"/>
    <property type="match status" value="1"/>
</dbReference>
<dbReference type="Pfam" id="PF04452">
    <property type="entry name" value="Methyltrans_RNA"/>
    <property type="match status" value="1"/>
</dbReference>
<dbReference type="Pfam" id="PF20260">
    <property type="entry name" value="PUA_4"/>
    <property type="match status" value="1"/>
</dbReference>
<dbReference type="PIRSF" id="PIRSF015601">
    <property type="entry name" value="MTase_slr0722"/>
    <property type="match status" value="1"/>
</dbReference>
<dbReference type="SUPFAM" id="SSF75217">
    <property type="entry name" value="alpha/beta knot"/>
    <property type="match status" value="1"/>
</dbReference>
<gene>
    <name type="primary">rsmE</name>
    <name type="ordered locus">aq_165</name>
</gene>
<proteinExistence type="evidence at protein level"/>
<reference key="1">
    <citation type="journal article" date="1998" name="Nature">
        <title>The complete genome of the hyperthermophilic bacterium Aquifex aeolicus.</title>
        <authorList>
            <person name="Deckert G."/>
            <person name="Warren P.V."/>
            <person name="Gaasterland T."/>
            <person name="Young W.G."/>
            <person name="Lenox A.L."/>
            <person name="Graham D.E."/>
            <person name="Overbeek R."/>
            <person name="Snead M.A."/>
            <person name="Keller M."/>
            <person name="Aujay M."/>
            <person name="Huber R."/>
            <person name="Feldman R.A."/>
            <person name="Short J.M."/>
            <person name="Olsen G.J."/>
            <person name="Swanson R.V."/>
        </authorList>
    </citation>
    <scope>NUCLEOTIDE SEQUENCE [LARGE SCALE GENOMIC DNA]</scope>
    <source>
        <strain>VF5</strain>
    </source>
</reference>
<feature type="chain" id="PRO_0000176204" description="Ribosomal RNA small subunit methyltransferase E">
    <location>
        <begin position="1"/>
        <end position="229"/>
    </location>
</feature>
<feature type="strand" evidence="3">
    <location>
        <begin position="3"/>
        <end position="5"/>
    </location>
</feature>
<feature type="strand" evidence="3">
    <location>
        <begin position="13"/>
        <end position="17"/>
    </location>
</feature>
<feature type="helix" evidence="3">
    <location>
        <begin position="19"/>
        <end position="26"/>
    </location>
</feature>
<feature type="strand" evidence="3">
    <location>
        <begin position="35"/>
        <end position="39"/>
    </location>
</feature>
<feature type="strand" evidence="3">
    <location>
        <begin position="42"/>
        <end position="51"/>
    </location>
</feature>
<feature type="strand" evidence="3">
    <location>
        <begin position="53"/>
        <end position="63"/>
    </location>
</feature>
<feature type="strand" evidence="3">
    <location>
        <begin position="70"/>
        <end position="78"/>
    </location>
</feature>
<feature type="helix" evidence="3">
    <location>
        <begin position="84"/>
        <end position="96"/>
    </location>
</feature>
<feature type="strand" evidence="3">
    <location>
        <begin position="100"/>
        <end position="105"/>
    </location>
</feature>
<feature type="helix" evidence="3">
    <location>
        <begin position="113"/>
        <end position="134"/>
    </location>
</feature>
<feature type="helix" evidence="3">
    <location>
        <begin position="148"/>
        <end position="150"/>
    </location>
</feature>
<feature type="strand" evidence="3">
    <location>
        <begin position="155"/>
        <end position="161"/>
    </location>
</feature>
<feature type="strand" evidence="4">
    <location>
        <begin position="163"/>
        <end position="165"/>
    </location>
</feature>
<feature type="helix" evidence="3">
    <location>
        <begin position="170"/>
        <end position="172"/>
    </location>
</feature>
<feature type="strand" evidence="3">
    <location>
        <begin position="178"/>
        <end position="184"/>
    </location>
</feature>
<feature type="helix" evidence="3">
    <location>
        <begin position="192"/>
        <end position="200"/>
    </location>
</feature>
<feature type="strand" evidence="3">
    <location>
        <begin position="204"/>
        <end position="206"/>
    </location>
</feature>
<feature type="strand" evidence="3">
    <location>
        <begin position="209"/>
        <end position="211"/>
    </location>
</feature>
<feature type="helix" evidence="3">
    <location>
        <begin position="215"/>
        <end position="228"/>
    </location>
</feature>
<accession>O66552</accession>
<evidence type="ECO:0000250" key="1"/>
<evidence type="ECO:0000305" key="2"/>
<evidence type="ECO:0007829" key="3">
    <source>
        <dbReference type="PDB" id="2EGV"/>
    </source>
</evidence>
<evidence type="ECO:0007829" key="4">
    <source>
        <dbReference type="PDB" id="2EGW"/>
    </source>
</evidence>